<feature type="chain" id="PRO_1000054879" description="Small ribosomal subunit protein uS15">
    <location>
        <begin position="1"/>
        <end position="89"/>
    </location>
</feature>
<protein>
    <recommendedName>
        <fullName evidence="1">Small ribosomal subunit protein uS15</fullName>
    </recommendedName>
    <alternativeName>
        <fullName evidence="2">30S ribosomal protein S15</fullName>
    </alternativeName>
</protein>
<proteinExistence type="inferred from homology"/>
<gene>
    <name evidence="1" type="primary">rpsO</name>
    <name type="ordered locus">SAHV_1263</name>
</gene>
<accession>A7X1Q7</accession>
<comment type="function">
    <text evidence="1">One of the primary rRNA binding proteins, it binds directly to 16S rRNA where it helps nucleate assembly of the platform of the 30S subunit by binding and bridging several RNA helices of the 16S rRNA.</text>
</comment>
<comment type="function">
    <text evidence="1">Forms an intersubunit bridge (bridge B4) with the 23S rRNA of the 50S subunit in the ribosome.</text>
</comment>
<comment type="subunit">
    <text evidence="1">Part of the 30S ribosomal subunit. Forms a bridge to the 50S subunit in the 70S ribosome, contacting the 23S rRNA.</text>
</comment>
<comment type="similarity">
    <text evidence="1">Belongs to the universal ribosomal protein uS15 family.</text>
</comment>
<sequence length="89" mass="10608">MAISQERKNEIIKEYRVHETDTGSPEVQIAVLTAEINAVNEHLRTHKKDHHSRRGLLKMVGRRRHLLNYLRSKDIQRYRELIKSLGIRR</sequence>
<name>RS15_STAA1</name>
<reference key="1">
    <citation type="journal article" date="2008" name="Antimicrob. Agents Chemother.">
        <title>Mutated response regulator graR is responsible for phenotypic conversion of Staphylococcus aureus from heterogeneous vancomycin-intermediate resistance to vancomycin-intermediate resistance.</title>
        <authorList>
            <person name="Neoh H.-M."/>
            <person name="Cui L."/>
            <person name="Yuzawa H."/>
            <person name="Takeuchi F."/>
            <person name="Matsuo M."/>
            <person name="Hiramatsu K."/>
        </authorList>
    </citation>
    <scope>NUCLEOTIDE SEQUENCE [LARGE SCALE GENOMIC DNA]</scope>
    <source>
        <strain>Mu3 / ATCC 700698</strain>
    </source>
</reference>
<evidence type="ECO:0000255" key="1">
    <source>
        <dbReference type="HAMAP-Rule" id="MF_01343"/>
    </source>
</evidence>
<evidence type="ECO:0000305" key="2"/>
<dbReference type="EMBL" id="AP009324">
    <property type="protein sequence ID" value="BAF78146.1"/>
    <property type="molecule type" value="Genomic_DNA"/>
</dbReference>
<dbReference type="RefSeq" id="WP_001018328.1">
    <property type="nucleotide sequence ID" value="NZ_CTYB01000004.1"/>
</dbReference>
<dbReference type="SMR" id="A7X1Q7"/>
<dbReference type="KEGG" id="saw:SAHV_1263"/>
<dbReference type="HOGENOM" id="CLU_148518_0_0_9"/>
<dbReference type="GO" id="GO:0022627">
    <property type="term" value="C:cytosolic small ribosomal subunit"/>
    <property type="evidence" value="ECO:0007669"/>
    <property type="project" value="TreeGrafter"/>
</dbReference>
<dbReference type="GO" id="GO:0019843">
    <property type="term" value="F:rRNA binding"/>
    <property type="evidence" value="ECO:0007669"/>
    <property type="project" value="UniProtKB-UniRule"/>
</dbReference>
<dbReference type="GO" id="GO:0003735">
    <property type="term" value="F:structural constituent of ribosome"/>
    <property type="evidence" value="ECO:0007669"/>
    <property type="project" value="InterPro"/>
</dbReference>
<dbReference type="GO" id="GO:0006412">
    <property type="term" value="P:translation"/>
    <property type="evidence" value="ECO:0007669"/>
    <property type="project" value="UniProtKB-UniRule"/>
</dbReference>
<dbReference type="CDD" id="cd00353">
    <property type="entry name" value="Ribosomal_S15p_S13e"/>
    <property type="match status" value="1"/>
</dbReference>
<dbReference type="FunFam" id="1.10.287.10:FF:000002">
    <property type="entry name" value="30S ribosomal protein S15"/>
    <property type="match status" value="1"/>
</dbReference>
<dbReference type="Gene3D" id="6.10.250.3130">
    <property type="match status" value="1"/>
</dbReference>
<dbReference type="Gene3D" id="1.10.287.10">
    <property type="entry name" value="S15/NS1, RNA-binding"/>
    <property type="match status" value="1"/>
</dbReference>
<dbReference type="HAMAP" id="MF_01343_B">
    <property type="entry name" value="Ribosomal_uS15_B"/>
    <property type="match status" value="1"/>
</dbReference>
<dbReference type="InterPro" id="IPR000589">
    <property type="entry name" value="Ribosomal_uS15"/>
</dbReference>
<dbReference type="InterPro" id="IPR005290">
    <property type="entry name" value="Ribosomal_uS15_bac-type"/>
</dbReference>
<dbReference type="InterPro" id="IPR009068">
    <property type="entry name" value="uS15_NS1_RNA-bd_sf"/>
</dbReference>
<dbReference type="NCBIfam" id="TIGR00952">
    <property type="entry name" value="S15_bact"/>
    <property type="match status" value="1"/>
</dbReference>
<dbReference type="PANTHER" id="PTHR23321">
    <property type="entry name" value="RIBOSOMAL PROTEIN S15, BACTERIAL AND ORGANELLAR"/>
    <property type="match status" value="1"/>
</dbReference>
<dbReference type="PANTHER" id="PTHR23321:SF26">
    <property type="entry name" value="SMALL RIBOSOMAL SUBUNIT PROTEIN US15M"/>
    <property type="match status" value="1"/>
</dbReference>
<dbReference type="Pfam" id="PF00312">
    <property type="entry name" value="Ribosomal_S15"/>
    <property type="match status" value="1"/>
</dbReference>
<dbReference type="SMART" id="SM01387">
    <property type="entry name" value="Ribosomal_S15"/>
    <property type="match status" value="1"/>
</dbReference>
<dbReference type="SUPFAM" id="SSF47060">
    <property type="entry name" value="S15/NS1 RNA-binding domain"/>
    <property type="match status" value="1"/>
</dbReference>
<dbReference type="PROSITE" id="PS00362">
    <property type="entry name" value="RIBOSOMAL_S15"/>
    <property type="match status" value="1"/>
</dbReference>
<keyword id="KW-0687">Ribonucleoprotein</keyword>
<keyword id="KW-0689">Ribosomal protein</keyword>
<keyword id="KW-0694">RNA-binding</keyword>
<keyword id="KW-0699">rRNA-binding</keyword>
<organism>
    <name type="scientific">Staphylococcus aureus (strain Mu3 / ATCC 700698)</name>
    <dbReference type="NCBI Taxonomy" id="418127"/>
    <lineage>
        <taxon>Bacteria</taxon>
        <taxon>Bacillati</taxon>
        <taxon>Bacillota</taxon>
        <taxon>Bacilli</taxon>
        <taxon>Bacillales</taxon>
        <taxon>Staphylococcaceae</taxon>
        <taxon>Staphylococcus</taxon>
    </lineage>
</organism>